<protein>
    <recommendedName>
        <fullName evidence="3">Molybdate-binding protein ModA</fullName>
    </recommendedName>
    <alternativeName>
        <fullName evidence="3">Molybdate/tungstate-binding protein ModA</fullName>
    </alternativeName>
</protein>
<feature type="signal peptide" evidence="3">
    <location>
        <begin position="1"/>
        <end position="21"/>
    </location>
</feature>
<feature type="chain" id="PRO_0000031831" description="Molybdate-binding protein ModA">
    <location>
        <begin position="22"/>
        <end position="261"/>
    </location>
</feature>
<feature type="binding site" evidence="2">
    <location>
        <position position="48"/>
    </location>
    <ligand>
        <name>molybdate</name>
        <dbReference type="ChEBI" id="CHEBI:36264"/>
    </ligand>
</feature>
<feature type="binding site" evidence="2">
    <location>
        <position position="76"/>
    </location>
    <ligand>
        <name>molybdate</name>
        <dbReference type="ChEBI" id="CHEBI:36264"/>
    </ligand>
</feature>
<feature type="binding site" evidence="2">
    <location>
        <position position="179"/>
    </location>
    <ligand>
        <name>molybdate</name>
        <dbReference type="ChEBI" id="CHEBI:36264"/>
    </ligand>
</feature>
<feature type="binding site" evidence="2">
    <location>
        <position position="197"/>
    </location>
    <ligand>
        <name>molybdate</name>
        <dbReference type="ChEBI" id="CHEBI:36264"/>
    </ligand>
</feature>
<feature type="lipid moiety-binding region" description="N-palmitoyl cysteine" evidence="3">
    <location>
        <position position="22"/>
    </location>
</feature>
<feature type="lipid moiety-binding region" description="S-diacylglycerol cysteine" evidence="3">
    <location>
        <position position="22"/>
    </location>
</feature>
<feature type="sequence conflict" description="In Ref. 1." evidence="3" ref="1">
    <original>MRWIGLSTGLVSAMLVAGLVACGSNSPASSPAGPTQGARSIVVFAAASLQSAFTQIGEQ</original>
    <variation>MWIEFTRIVASRADAGCPVDRGVRGCLAAVCVSLRSVSM</variation>
    <location>
        <begin position="1"/>
        <end position="59"/>
    </location>
</feature>
<feature type="sequence conflict" description="In Ref. 1." evidence="3" ref="1">
    <original>MDSVAKAGLLAGHPTNFATNTMVIVAAAGNPKKIR</original>
    <variation>IGQCGQGGVAGRSSDKLRHQHDGHRCRRRQSQEDP</variation>
    <location>
        <begin position="100"/>
        <end position="134"/>
    </location>
</feature>
<evidence type="ECO:0000250" key="1"/>
<evidence type="ECO:0000250" key="2">
    <source>
        <dbReference type="UniProtKB" id="P37329"/>
    </source>
</evidence>
<evidence type="ECO:0000305" key="3"/>
<reference key="1">
    <citation type="submission" date="1996-07" db="EMBL/GenBank/DDBJ databases">
        <authorList>
            <person name="Laqueyrerie A."/>
        </authorList>
    </citation>
    <scope>NUCLEOTIDE SEQUENCE [GENOMIC DNA]</scope>
    <source>
        <strain>ATCC 25618 / H37Rv</strain>
    </source>
</reference>
<reference key="2">
    <citation type="journal article" date="1998" name="Nature">
        <title>Deciphering the biology of Mycobacterium tuberculosis from the complete genome sequence.</title>
        <authorList>
            <person name="Cole S.T."/>
            <person name="Brosch R."/>
            <person name="Parkhill J."/>
            <person name="Garnier T."/>
            <person name="Churcher C.M."/>
            <person name="Harris D.E."/>
            <person name="Gordon S.V."/>
            <person name="Eiglmeier K."/>
            <person name="Gas S."/>
            <person name="Barry C.E. III"/>
            <person name="Tekaia F."/>
            <person name="Badcock K."/>
            <person name="Basham D."/>
            <person name="Brown D."/>
            <person name="Chillingworth T."/>
            <person name="Connor R."/>
            <person name="Davies R.M."/>
            <person name="Devlin K."/>
            <person name="Feltwell T."/>
            <person name="Gentles S."/>
            <person name="Hamlin N."/>
            <person name="Holroyd S."/>
            <person name="Hornsby T."/>
            <person name="Jagels K."/>
            <person name="Krogh A."/>
            <person name="McLean J."/>
            <person name="Moule S."/>
            <person name="Murphy L.D."/>
            <person name="Oliver S."/>
            <person name="Osborne J."/>
            <person name="Quail M.A."/>
            <person name="Rajandream M.A."/>
            <person name="Rogers J."/>
            <person name="Rutter S."/>
            <person name="Seeger K."/>
            <person name="Skelton S."/>
            <person name="Squares S."/>
            <person name="Squares R."/>
            <person name="Sulston J.E."/>
            <person name="Taylor K."/>
            <person name="Whitehead S."/>
            <person name="Barrell B.G."/>
        </authorList>
    </citation>
    <scope>NUCLEOTIDE SEQUENCE [LARGE SCALE GENOMIC DNA]</scope>
    <source>
        <strain>ATCC 25618 / H37Rv</strain>
    </source>
</reference>
<reference key="3">
    <citation type="journal article" date="2008" name="BMC Syst. Biol.">
        <title>targetTB: a target identification pipeline for Mycobacterium tuberculosis through an interactome, reactome and genome-scale structural analysis.</title>
        <authorList>
            <person name="Raman K."/>
            <person name="Yeturu K."/>
            <person name="Chandra N."/>
        </authorList>
    </citation>
    <scope>IDENTIFICATION AS A DRUG TARGET [LARGE SCALE ANALYSIS]</scope>
</reference>
<reference key="4">
    <citation type="journal article" date="2011" name="Mol. Cell. Proteomics">
        <title>Proteogenomic analysis of Mycobacterium tuberculosis by high resolution mass spectrometry.</title>
        <authorList>
            <person name="Kelkar D.S."/>
            <person name="Kumar D."/>
            <person name="Kumar P."/>
            <person name="Balakrishnan L."/>
            <person name="Muthusamy B."/>
            <person name="Yadav A.K."/>
            <person name="Shrivastava P."/>
            <person name="Marimuthu A."/>
            <person name="Anand S."/>
            <person name="Sundaram H."/>
            <person name="Kingsbury R."/>
            <person name="Harsha H.C."/>
            <person name="Nair B."/>
            <person name="Prasad T.S."/>
            <person name="Chauhan D.S."/>
            <person name="Katoch K."/>
            <person name="Katoch V.M."/>
            <person name="Kumar P."/>
            <person name="Chaerkady R."/>
            <person name="Ramachandran S."/>
            <person name="Dash D."/>
            <person name="Pandey A."/>
        </authorList>
    </citation>
    <scope>IDENTIFICATION BY MASS SPECTROMETRY [LARGE SCALE ANALYSIS]</scope>
    <source>
        <strain>ATCC 25618 / H37Rv</strain>
    </source>
</reference>
<dbReference type="EMBL" id="X99258">
    <property type="protein sequence ID" value="CAA67642.1"/>
    <property type="molecule type" value="Genomic_DNA"/>
</dbReference>
<dbReference type="EMBL" id="AL123456">
    <property type="protein sequence ID" value="CCP44623.1"/>
    <property type="molecule type" value="Genomic_DNA"/>
</dbReference>
<dbReference type="PIR" id="A70666">
    <property type="entry name" value="A70666"/>
</dbReference>
<dbReference type="RefSeq" id="NP_216373.1">
    <property type="nucleotide sequence ID" value="NC_000962.3"/>
</dbReference>
<dbReference type="RefSeq" id="WP_003409326.1">
    <property type="nucleotide sequence ID" value="NZ_NVQJ01000013.1"/>
</dbReference>
<dbReference type="SMR" id="P9WGU3"/>
<dbReference type="FunCoup" id="P9WGU3">
    <property type="interactions" value="85"/>
</dbReference>
<dbReference type="STRING" id="83332.Rv1857"/>
<dbReference type="TCDB" id="3.A.1.8.5">
    <property type="family name" value="the atp-binding cassette (abc) superfamily"/>
</dbReference>
<dbReference type="PaxDb" id="83332-Rv1857"/>
<dbReference type="DNASU" id="885655"/>
<dbReference type="GeneID" id="885655"/>
<dbReference type="KEGG" id="mtu:Rv1857"/>
<dbReference type="KEGG" id="mtv:RVBD_1857"/>
<dbReference type="TubercuList" id="Rv1857"/>
<dbReference type="eggNOG" id="COG0725">
    <property type="taxonomic scope" value="Bacteria"/>
</dbReference>
<dbReference type="InParanoid" id="P9WGU3"/>
<dbReference type="OrthoDB" id="9785015at2"/>
<dbReference type="PhylomeDB" id="P9WGU3"/>
<dbReference type="Proteomes" id="UP000001584">
    <property type="component" value="Chromosome"/>
</dbReference>
<dbReference type="GO" id="GO:0005886">
    <property type="term" value="C:plasma membrane"/>
    <property type="evidence" value="ECO:0007669"/>
    <property type="project" value="UniProtKB-SubCell"/>
</dbReference>
<dbReference type="GO" id="GO:0046872">
    <property type="term" value="F:metal ion binding"/>
    <property type="evidence" value="ECO:0007669"/>
    <property type="project" value="UniProtKB-KW"/>
</dbReference>
<dbReference type="GO" id="GO:0030973">
    <property type="term" value="F:molybdate ion binding"/>
    <property type="evidence" value="ECO:0000250"/>
    <property type="project" value="UniProtKB"/>
</dbReference>
<dbReference type="GO" id="GO:0015689">
    <property type="term" value="P:molybdate ion transport"/>
    <property type="evidence" value="ECO:0000318"/>
    <property type="project" value="GO_Central"/>
</dbReference>
<dbReference type="CDD" id="cd13538">
    <property type="entry name" value="PBP2_ModA_like_1"/>
    <property type="match status" value="1"/>
</dbReference>
<dbReference type="FunFam" id="3.40.190.10:FF:000030">
    <property type="entry name" value="Molybdate ABC transporter substrate-binding protein"/>
    <property type="match status" value="1"/>
</dbReference>
<dbReference type="Gene3D" id="3.40.190.10">
    <property type="entry name" value="Periplasmic binding protein-like II"/>
    <property type="match status" value="2"/>
</dbReference>
<dbReference type="InterPro" id="IPR005950">
    <property type="entry name" value="ModA"/>
</dbReference>
<dbReference type="InterPro" id="IPR050682">
    <property type="entry name" value="ModA/WtpA"/>
</dbReference>
<dbReference type="NCBIfam" id="TIGR01256">
    <property type="entry name" value="modA"/>
    <property type="match status" value="1"/>
</dbReference>
<dbReference type="PANTHER" id="PTHR30632">
    <property type="entry name" value="MOLYBDATE-BINDING PERIPLASMIC PROTEIN"/>
    <property type="match status" value="1"/>
</dbReference>
<dbReference type="PANTHER" id="PTHR30632:SF0">
    <property type="entry name" value="SULFATE-BINDING PROTEIN"/>
    <property type="match status" value="1"/>
</dbReference>
<dbReference type="Pfam" id="PF13531">
    <property type="entry name" value="SBP_bac_11"/>
    <property type="match status" value="1"/>
</dbReference>
<dbReference type="PIRSF" id="PIRSF004846">
    <property type="entry name" value="ModA"/>
    <property type="match status" value="1"/>
</dbReference>
<dbReference type="SUPFAM" id="SSF53850">
    <property type="entry name" value="Periplasmic binding protein-like II"/>
    <property type="match status" value="1"/>
</dbReference>
<dbReference type="PROSITE" id="PS51257">
    <property type="entry name" value="PROKAR_LIPOPROTEIN"/>
    <property type="match status" value="1"/>
</dbReference>
<accession>P9WGU3</accession>
<accession>L0T833</accession>
<accession>O05125</accession>
<accession>P0A5Y0</accession>
<accession>P95157</accession>
<organism>
    <name type="scientific">Mycobacterium tuberculosis (strain ATCC 25618 / H37Rv)</name>
    <dbReference type="NCBI Taxonomy" id="83332"/>
    <lineage>
        <taxon>Bacteria</taxon>
        <taxon>Bacillati</taxon>
        <taxon>Actinomycetota</taxon>
        <taxon>Actinomycetes</taxon>
        <taxon>Mycobacteriales</taxon>
        <taxon>Mycobacteriaceae</taxon>
        <taxon>Mycobacterium</taxon>
        <taxon>Mycobacterium tuberculosis complex</taxon>
    </lineage>
</organism>
<sequence>MRWIGLSTGLVSAMLVAGLVACGSNSPASSPAGPTQGARSIVVFAAASLQSAFTQIGEQFKAGNPGVNVNFAFAGSSELATQLTQGATADVFASADTAQMDSVAKAGLLAGHPTNFATNTMVIVAAAGNPKKIRSFADLTRPGLNVVVCQPSVPCGSATRRIEDATGIHLNPVSEELSVTDVLNKVITGQADAGLVYVSDALSVATKVTCVRFPEAAGVVNVYAIAVLKRTSQPALARQFVAMVTAAAGRRILDQSGFAKP</sequence>
<keyword id="KW-1003">Cell membrane</keyword>
<keyword id="KW-0449">Lipoprotein</keyword>
<keyword id="KW-0472">Membrane</keyword>
<keyword id="KW-0479">Metal-binding</keyword>
<keyword id="KW-0500">Molybdenum</keyword>
<keyword id="KW-0564">Palmitate</keyword>
<keyword id="KW-1185">Reference proteome</keyword>
<keyword id="KW-0732">Signal</keyword>
<keyword id="KW-0813">Transport</keyword>
<keyword id="KW-0826">Tungsten</keyword>
<proteinExistence type="evidence at protein level"/>
<comment type="function">
    <text evidence="1">Involved in the transport of molybdenum into the cell. Part of the binding-protein-dependent transport system ModABCD (By similarity).</text>
</comment>
<comment type="subunit">
    <text evidence="3">The complex is composed of two ATP-binding proteins (ModC), two transmembrane proteins (ModB) and a solute-binding protein (ModA).</text>
</comment>
<comment type="subcellular location">
    <subcellularLocation>
        <location evidence="3">Cell membrane</location>
        <topology evidence="3">Lipid-anchor</topology>
    </subcellularLocation>
</comment>
<comment type="miscellaneous">
    <text>Was identified as a high-confidence drug target.</text>
</comment>
<comment type="similarity">
    <text evidence="3">Belongs to the bacterial solute-binding protein ModA family.</text>
</comment>
<gene>
    <name type="primary">modA</name>
    <name type="ordered locus">Rv1857</name>
    <name type="ORF">MTCY359.16c</name>
</gene>
<name>MODA_MYCTU</name>